<keyword id="KW-1043">Host membrane</keyword>
<keyword id="KW-0472">Membrane</keyword>
<keyword id="KW-1185">Reference proteome</keyword>
<keyword id="KW-0732">Signal</keyword>
<keyword id="KW-0812">Transmembrane</keyword>
<keyword id="KW-1133">Transmembrane helix</keyword>
<proteinExistence type="inferred from homology"/>
<feature type="signal peptide" evidence="1">
    <location>
        <begin position="1"/>
        <end position="18"/>
    </location>
</feature>
<feature type="chain" id="PRO_0000384891" description="Putative transmembrane protein ORF23">
    <location>
        <begin position="19"/>
        <end position="148"/>
    </location>
</feature>
<feature type="topological domain" description="Extracellular" evidence="1">
    <location>
        <begin position="19"/>
        <end position="118"/>
    </location>
</feature>
<feature type="transmembrane region" description="Helical" evidence="1">
    <location>
        <begin position="119"/>
        <end position="139"/>
    </location>
</feature>
<feature type="topological domain" description="Cytoplasmic" evidence="1">
    <location>
        <begin position="140"/>
        <end position="148"/>
    </location>
</feature>
<name>Y023_HIS1I</name>
<organism>
    <name type="scientific">His1 virus (isolate Australia/Victoria)</name>
    <name type="common">His1V</name>
    <name type="synonym">Haloarcula hispanica virus 1</name>
    <dbReference type="NCBI Taxonomy" id="654912"/>
    <lineage>
        <taxon>Viruses</taxon>
        <taxon>Viruses incertae sedis</taxon>
        <taxon>Halspiviridae</taxon>
        <taxon>Salterprovirus</taxon>
        <taxon>Salterprovirus His1</taxon>
    </lineage>
</organism>
<evidence type="ECO:0000255" key="1"/>
<evidence type="ECO:0000305" key="2"/>
<reference key="1">
    <citation type="journal article" date="2006" name="Virology">
        <title>His1 and His2 are distantly related, spindle-shaped haloviruses belonging to the novel virus group, Salterprovirus.</title>
        <authorList>
            <person name="Bath C."/>
            <person name="Cukalac T."/>
            <person name="Porter K."/>
            <person name="Dyall-Smith M.L."/>
        </authorList>
    </citation>
    <scope>NUCLEOTIDE SEQUENCE [GENOMIC DNA]</scope>
</reference>
<gene>
    <name type="ORF">ORF23</name>
</gene>
<comment type="subcellular location">
    <subcellularLocation>
        <location evidence="2">Host membrane</location>
        <topology evidence="2">Single-pass type I membrane protein</topology>
    </subcellularLocation>
</comment>
<accession>Q25BH2</accession>
<sequence length="148" mass="16008">MVIILLGVSIVVPGLFLATETPQTNTFEQTELERATLTGEVSTEVTQVTNQEQVNITVLNRRDGTIDSTGELQVGESANLTISGETITVEIIDVIDTDNVLVRYTYPLYVGWPSGAETIITNIADIIIMATAVMIIGAIYTGYKVSIK</sequence>
<organismHost>
    <name type="scientific">Haloarcula hispanica</name>
    <dbReference type="NCBI Taxonomy" id="51589"/>
</organismHost>
<dbReference type="EMBL" id="AF191796">
    <property type="protein sequence ID" value="AAQ13738.1"/>
    <property type="molecule type" value="Genomic_DNA"/>
</dbReference>
<dbReference type="RefSeq" id="YP_529535.1">
    <property type="nucleotide sequence ID" value="NC_007914.1"/>
</dbReference>
<dbReference type="KEGG" id="vg:5142414"/>
<dbReference type="Proteomes" id="UP000007024">
    <property type="component" value="Segment"/>
</dbReference>
<dbReference type="GO" id="GO:0033644">
    <property type="term" value="C:host cell membrane"/>
    <property type="evidence" value="ECO:0007669"/>
    <property type="project" value="UniProtKB-SubCell"/>
</dbReference>
<dbReference type="GO" id="GO:0016020">
    <property type="term" value="C:membrane"/>
    <property type="evidence" value="ECO:0007669"/>
    <property type="project" value="UniProtKB-KW"/>
</dbReference>
<protein>
    <recommendedName>
        <fullName>Putative transmembrane protein ORF23</fullName>
    </recommendedName>
</protein>